<reference key="1">
    <citation type="journal article" date="2003" name="Toxicon">
        <title>cDNA sequence analysis of seven peptide toxins from the spider Selenocosmia huwena.</title>
        <authorList>
            <person name="Diao J."/>
            <person name="Lin Y."/>
            <person name="Tang J."/>
            <person name="Liang S.-P."/>
        </authorList>
    </citation>
    <scope>NUCLEOTIDE SEQUENCE [MRNA]</scope>
    <source>
        <tissue>Venom gland</tissue>
    </source>
</reference>
<reference key="2">
    <citation type="journal article" date="2003" name="Zhongguo Sheng Wu Hua Xue Yu Fen Zi Sheng Wu Xue Bao">
        <title>Purification and characterization of HWTX-VII and HWTX-VIII: two novel insecticidal neurotoxins from the Chinese bird spider Selenocosmia huwena.</title>
        <authorList>
            <person name="Dai J."/>
            <person name="Liang S.-P."/>
        </authorList>
    </citation>
    <scope>PROTEIN SEQUENCE OF 49-84</scope>
    <scope>CHARACTERIZATION</scope>
    <source>
        <tissue>Venom</tissue>
    </source>
</reference>
<reference key="3">
    <citation type="journal article" date="2004" name="Toxicon">
        <title>An overview of peptide toxins from the venom of the Chinese bird spider Selenocosmia huwena Wang [=Ornithoctonus huwena (Wang)].</title>
        <authorList>
            <person name="Liang S.-P."/>
        </authorList>
    </citation>
    <scope>REVIEW</scope>
</reference>
<evidence type="ECO:0000250" key="1"/>
<evidence type="ECO:0000255" key="2"/>
<evidence type="ECO:0000269" key="3">
    <source ref="2"/>
</evidence>
<evidence type="ECO:0000305" key="4"/>
<protein>
    <recommendedName>
        <fullName>U1-theraphotoxin-Hs1a</fullName>
        <shortName>U1-TRTX-Hs1a</shortName>
    </recommendedName>
    <alternativeName>
        <fullName>Huwentoxin-7</fullName>
    </alternativeName>
    <alternativeName>
        <fullName>Huwentoxin-VII</fullName>
        <shortName>HwTx-VII</shortName>
    </alternativeName>
</protein>
<comment type="function">
    <text>Blocks neuromuscular transmission. Acts cooperatively to potentiate the activity of huwentoxin-I. Paralyzes locusts and kills mice following intracerebroventricular injection.</text>
</comment>
<comment type="subcellular location">
    <subcellularLocation>
        <location>Secreted</location>
    </subcellularLocation>
</comment>
<comment type="tissue specificity">
    <text>Expressed by the venom gland.</text>
</comment>
<comment type="similarity">
    <text evidence="4">Belongs to the neurotoxin 12 (Hwtx-2) family. 02 (Hwtx-2) subfamily.</text>
</comment>
<name>TXH7_CYRSC</name>
<feature type="signal peptide" evidence="2">
    <location>
        <begin position="1"/>
        <end position="22"/>
    </location>
</feature>
<feature type="propeptide" id="PRO_0000035527" evidence="3">
    <location>
        <begin position="23"/>
        <end position="48"/>
    </location>
</feature>
<feature type="chain" id="PRO_0000035528" description="U1-theraphotoxin-Hs1a">
    <location>
        <begin position="49"/>
        <end position="84"/>
    </location>
</feature>
<feature type="disulfide bond" evidence="1">
    <location>
        <begin position="51"/>
        <end position="65"/>
    </location>
</feature>
<feature type="disulfide bond" evidence="1">
    <location>
        <begin position="55"/>
        <end position="76"/>
    </location>
</feature>
<feature type="disulfide bond" evidence="1">
    <location>
        <begin position="70"/>
        <end position="81"/>
    </location>
</feature>
<keyword id="KW-0903">Direct protein sequencing</keyword>
<keyword id="KW-1015">Disulfide bond</keyword>
<keyword id="KW-0528">Neurotoxin</keyword>
<keyword id="KW-0629">Postsynaptic neurotoxin</keyword>
<keyword id="KW-0964">Secreted</keyword>
<keyword id="KW-0732">Signal</keyword>
<keyword id="KW-0800">Toxin</keyword>
<dbReference type="SMR" id="P68421"/>
<dbReference type="ArachnoServer" id="AS000328">
    <property type="toxin name" value="U1-theraphotoxin-Hs1a"/>
</dbReference>
<dbReference type="GO" id="GO:0005576">
    <property type="term" value="C:extracellular region"/>
    <property type="evidence" value="ECO:0007669"/>
    <property type="project" value="UniProtKB-SubCell"/>
</dbReference>
<dbReference type="GO" id="GO:0035792">
    <property type="term" value="C:host cell postsynaptic membrane"/>
    <property type="evidence" value="ECO:0007669"/>
    <property type="project" value="UniProtKB-KW"/>
</dbReference>
<dbReference type="GO" id="GO:0090729">
    <property type="term" value="F:toxin activity"/>
    <property type="evidence" value="ECO:0007669"/>
    <property type="project" value="UniProtKB-KW"/>
</dbReference>
<dbReference type="InterPro" id="IPR012625">
    <property type="entry name" value="Hwtx-2-like"/>
</dbReference>
<dbReference type="Pfam" id="PF08089">
    <property type="entry name" value="Toxin_20"/>
    <property type="match status" value="1"/>
</dbReference>
<dbReference type="SUPFAM" id="SSF57059">
    <property type="entry name" value="omega toxin-like"/>
    <property type="match status" value="1"/>
</dbReference>
<dbReference type="PROSITE" id="PS60022">
    <property type="entry name" value="HWTX_2"/>
    <property type="match status" value="1"/>
</dbReference>
<sequence>MKVTLIAILTCAAVLVLHTTAAEELEESQLMEVGMPDTELAAVDEERLFECSFSCEIEKEGDKPCKKKKCKGGWKCKFNMCVKV</sequence>
<proteinExistence type="evidence at protein level"/>
<organism>
    <name type="scientific">Cyriopagopus schmidti</name>
    <name type="common">Chinese bird spider</name>
    <name type="synonym">Haplopelma schmidti</name>
    <dbReference type="NCBI Taxonomy" id="29017"/>
    <lineage>
        <taxon>Eukaryota</taxon>
        <taxon>Metazoa</taxon>
        <taxon>Ecdysozoa</taxon>
        <taxon>Arthropoda</taxon>
        <taxon>Chelicerata</taxon>
        <taxon>Arachnida</taxon>
        <taxon>Araneae</taxon>
        <taxon>Mygalomorphae</taxon>
        <taxon>Theraphosidae</taxon>
        <taxon>Cyriopagopus</taxon>
    </lineage>
</organism>
<accession>P68421</accession>